<protein>
    <recommendedName>
        <fullName evidence="2">Small ribosomal subunit protein mS25</fullName>
    </recommendedName>
    <alternativeName>
        <fullName evidence="2">28S ribosomal protein S25, mitochondrial</fullName>
        <shortName>MRP-S25</shortName>
        <shortName>S25mt</shortName>
    </alternativeName>
</protein>
<reference key="1">
    <citation type="journal article" date="1998" name="Science">
        <title>Genome sequence of the nematode C. elegans: a platform for investigating biology.</title>
        <authorList>
            <consortium name="The C. elegans sequencing consortium"/>
        </authorList>
    </citation>
    <scope>NUCLEOTIDE SEQUENCE [LARGE SCALE GENOMIC DNA]</scope>
    <source>
        <strain>Bristol N2</strain>
    </source>
</reference>
<keyword id="KW-0496">Mitochondrion</keyword>
<keyword id="KW-1185">Reference proteome</keyword>
<keyword id="KW-0687">Ribonucleoprotein</keyword>
<keyword id="KW-0689">Ribosomal protein</keyword>
<sequence length="170" mass="19803">MPFMHGSMPLRRTFFYLQQGKVKLRDNVNVFSMGFHKNPTPEQSGARDFVYWNWAQLQYHNPKVQLVKHADKVVTPFARAYLNDGREVLFDLDGMKREEIEKLLAKTLGKTELVERREHLESIAKLNPADFGSKNERQCMCEVQGQHPCTGLLRAPQCVTGKYRWNHNLI</sequence>
<accession>Q9N361</accession>
<feature type="chain" id="PRO_0000087710" description="Small ribosomal subunit protein mS25">
    <location>
        <begin position="1"/>
        <end position="170"/>
    </location>
</feature>
<name>RT25_CAEEL</name>
<proteinExistence type="inferred from homology"/>
<comment type="subunit">
    <text evidence="1">Component of the mitochondrial ribosome small subunit (28S) which comprises a 12S rRNA and about 30 distinct proteins.</text>
</comment>
<comment type="subcellular location">
    <subcellularLocation>
        <location evidence="1">Mitochondrion</location>
    </subcellularLocation>
</comment>
<comment type="similarity">
    <text evidence="2">Belongs to the mitochondrion-specific ribosomal protein mS25 family.</text>
</comment>
<organism>
    <name type="scientific">Caenorhabditis elegans</name>
    <dbReference type="NCBI Taxonomy" id="6239"/>
    <lineage>
        <taxon>Eukaryota</taxon>
        <taxon>Metazoa</taxon>
        <taxon>Ecdysozoa</taxon>
        <taxon>Nematoda</taxon>
        <taxon>Chromadorea</taxon>
        <taxon>Rhabditida</taxon>
        <taxon>Rhabditina</taxon>
        <taxon>Rhabditomorpha</taxon>
        <taxon>Rhabditoidea</taxon>
        <taxon>Rhabditidae</taxon>
        <taxon>Peloderinae</taxon>
        <taxon>Caenorhabditis</taxon>
    </lineage>
</organism>
<evidence type="ECO:0000250" key="1">
    <source>
        <dbReference type="UniProtKB" id="P82669"/>
    </source>
</evidence>
<evidence type="ECO:0000305" key="2"/>
<gene>
    <name type="primary">mrps-25</name>
    <name type="ORF">Y55F3AM.1</name>
</gene>
<dbReference type="EMBL" id="FO081813">
    <property type="protein sequence ID" value="CCD74058.1"/>
    <property type="molecule type" value="Genomic_DNA"/>
</dbReference>
<dbReference type="RefSeq" id="NP_500032.1">
    <property type="nucleotide sequence ID" value="NM_067631.6"/>
</dbReference>
<dbReference type="SMR" id="Q9N361"/>
<dbReference type="BioGRID" id="42084">
    <property type="interactions" value="4"/>
</dbReference>
<dbReference type="FunCoup" id="Q9N361">
    <property type="interactions" value="2378"/>
</dbReference>
<dbReference type="STRING" id="6239.Y55F3AM.1.1"/>
<dbReference type="PaxDb" id="6239-Y55F3AM.1"/>
<dbReference type="PeptideAtlas" id="Q9N361"/>
<dbReference type="EnsemblMetazoa" id="Y55F3AM.1.1">
    <property type="protein sequence ID" value="Y55F3AM.1.1"/>
    <property type="gene ID" value="WBGene00021920"/>
</dbReference>
<dbReference type="GeneID" id="176926"/>
<dbReference type="KEGG" id="cel:CELE_Y55F3AM.1"/>
<dbReference type="UCSC" id="Y55F3AM.1.1">
    <property type="organism name" value="c. elegans"/>
</dbReference>
<dbReference type="AGR" id="WB:WBGene00021920"/>
<dbReference type="CTD" id="176926"/>
<dbReference type="WormBase" id="Y55F3AM.1">
    <property type="protein sequence ID" value="CE22547"/>
    <property type="gene ID" value="WBGene00021920"/>
    <property type="gene designation" value="mrps-25"/>
</dbReference>
<dbReference type="eggNOG" id="KOG4079">
    <property type="taxonomic scope" value="Eukaryota"/>
</dbReference>
<dbReference type="GeneTree" id="ENSGT00640000091558"/>
<dbReference type="HOGENOM" id="CLU_094727_0_0_1"/>
<dbReference type="InParanoid" id="Q9N361"/>
<dbReference type="OMA" id="FCICEVP"/>
<dbReference type="OrthoDB" id="5919182at2759"/>
<dbReference type="PhylomeDB" id="Q9N361"/>
<dbReference type="Reactome" id="R-CEL-5389840">
    <property type="pathway name" value="Mitochondrial translation elongation"/>
</dbReference>
<dbReference type="Reactome" id="R-CEL-5419276">
    <property type="pathway name" value="Mitochondrial translation termination"/>
</dbReference>
<dbReference type="PRO" id="PR:Q9N361"/>
<dbReference type="Proteomes" id="UP000001940">
    <property type="component" value="Chromosome IV"/>
</dbReference>
<dbReference type="Bgee" id="WBGene00021920">
    <property type="expression patterns" value="Expressed in pharyngeal muscle cell (C elegans) and 4 other cell types or tissues"/>
</dbReference>
<dbReference type="GO" id="GO:0005763">
    <property type="term" value="C:mitochondrial small ribosomal subunit"/>
    <property type="evidence" value="ECO:0000250"/>
    <property type="project" value="UniProtKB"/>
</dbReference>
<dbReference type="GO" id="GO:0005739">
    <property type="term" value="C:mitochondrion"/>
    <property type="evidence" value="ECO:0000318"/>
    <property type="project" value="GO_Central"/>
</dbReference>
<dbReference type="GO" id="GO:0003735">
    <property type="term" value="F:structural constituent of ribosome"/>
    <property type="evidence" value="ECO:0000318"/>
    <property type="project" value="GO_Central"/>
</dbReference>
<dbReference type="FunFam" id="3.40.30.10:FF:000436">
    <property type="entry name" value="Probable 28S ribosomal protein S25, mitochondrial"/>
    <property type="match status" value="1"/>
</dbReference>
<dbReference type="Gene3D" id="3.40.30.10">
    <property type="entry name" value="Glutaredoxin"/>
    <property type="match status" value="1"/>
</dbReference>
<dbReference type="InterPro" id="IPR007741">
    <property type="entry name" value="Ribosomal_mL43/mS25/NADH_DH"/>
</dbReference>
<dbReference type="InterPro" id="IPR040049">
    <property type="entry name" value="Ribosomal_mS25/mL61"/>
</dbReference>
<dbReference type="InterPro" id="IPR036249">
    <property type="entry name" value="Thioredoxin-like_sf"/>
</dbReference>
<dbReference type="PANTHER" id="PTHR13274">
    <property type="entry name" value="MITOCHONDRIAL RIBOSOMAL PROTEIN S25"/>
    <property type="match status" value="1"/>
</dbReference>
<dbReference type="PANTHER" id="PTHR13274:SF2">
    <property type="entry name" value="SMALL RIBOSOMAL SUBUNIT PROTEIN MS25"/>
    <property type="match status" value="1"/>
</dbReference>
<dbReference type="Pfam" id="PF05047">
    <property type="entry name" value="L51_S25_CI-B8"/>
    <property type="match status" value="1"/>
</dbReference>
<dbReference type="SMART" id="SM00916">
    <property type="entry name" value="L51_S25_CI-B8"/>
    <property type="match status" value="1"/>
</dbReference>
<dbReference type="SUPFAM" id="SSF52833">
    <property type="entry name" value="Thioredoxin-like"/>
    <property type="match status" value="1"/>
</dbReference>